<comment type="function">
    <text evidence="1">Together with the chaperonin GroEL, plays an essential role in assisting protein folding. The GroEL-GroES system forms a nano-cage that allows encapsulation of the non-native substrate proteins and provides a physical environment optimized to promote and accelerate protein folding. GroES binds to the apical surface of the GroEL ring, thereby capping the opening of the GroEL channel.</text>
</comment>
<comment type="subunit">
    <text evidence="1">Heptamer of 7 subunits arranged in a ring. Interacts with the chaperonin GroEL.</text>
</comment>
<comment type="subcellular location">
    <subcellularLocation>
        <location evidence="1">Cytoplasm</location>
    </subcellularLocation>
</comment>
<comment type="similarity">
    <text evidence="1">Belongs to the GroES chaperonin family.</text>
</comment>
<feature type="chain" id="PRO_1000025337" description="Co-chaperonin GroES">
    <location>
        <begin position="1"/>
        <end position="97"/>
    </location>
</feature>
<reference key="1">
    <citation type="submission" date="2007-04" db="EMBL/GenBank/DDBJ databases">
        <title>Complete sequence of Pseudomonas mendocina ymp.</title>
        <authorList>
            <consortium name="US DOE Joint Genome Institute"/>
            <person name="Copeland A."/>
            <person name="Lucas S."/>
            <person name="Lapidus A."/>
            <person name="Barry K."/>
            <person name="Glavina del Rio T."/>
            <person name="Dalin E."/>
            <person name="Tice H."/>
            <person name="Pitluck S."/>
            <person name="Kiss H."/>
            <person name="Brettin T."/>
            <person name="Detter J.C."/>
            <person name="Bruce D."/>
            <person name="Han C."/>
            <person name="Schmutz J."/>
            <person name="Larimer F."/>
            <person name="Land M."/>
            <person name="Hauser L."/>
            <person name="Kyrpides N."/>
            <person name="Mikhailova N."/>
            <person name="Hersman L."/>
            <person name="Dubois J."/>
            <person name="Maurice P."/>
            <person name="Richardson P."/>
        </authorList>
    </citation>
    <scope>NUCLEOTIDE SEQUENCE [LARGE SCALE GENOMIC DNA]</scope>
    <source>
        <strain>ymp</strain>
    </source>
</reference>
<evidence type="ECO:0000255" key="1">
    <source>
        <dbReference type="HAMAP-Rule" id="MF_00580"/>
    </source>
</evidence>
<organism>
    <name type="scientific">Ectopseudomonas mendocina (strain ymp)</name>
    <name type="common">Pseudomonas mendocina</name>
    <dbReference type="NCBI Taxonomy" id="399739"/>
    <lineage>
        <taxon>Bacteria</taxon>
        <taxon>Pseudomonadati</taxon>
        <taxon>Pseudomonadota</taxon>
        <taxon>Gammaproteobacteria</taxon>
        <taxon>Pseudomonadales</taxon>
        <taxon>Pseudomonadaceae</taxon>
        <taxon>Ectopseudomonas</taxon>
    </lineage>
</organism>
<protein>
    <recommendedName>
        <fullName evidence="1">Co-chaperonin GroES</fullName>
    </recommendedName>
    <alternativeName>
        <fullName evidence="1">10 kDa chaperonin</fullName>
    </alternativeName>
    <alternativeName>
        <fullName evidence="1">Chaperonin-10</fullName>
        <shortName evidence="1">Cpn10</shortName>
    </alternativeName>
</protein>
<accession>A4XYL9</accession>
<sequence length="97" mass="10236">MKLRPLHDRVVIRRSEEETKTAGGIVLPGSAAEKPNQGEVVAVGTGKVLENGEVRPLAVKVGDKVVFGPYSGSNTVKVDGEDLLVMGENEILAVIEA</sequence>
<keyword id="KW-0143">Chaperone</keyword>
<keyword id="KW-0963">Cytoplasm</keyword>
<gene>
    <name evidence="1" type="primary">groES</name>
    <name evidence="1" type="synonym">groS</name>
    <name type="ordered locus">Pmen_3687</name>
</gene>
<dbReference type="EMBL" id="CP000680">
    <property type="protein sequence ID" value="ABP86435.1"/>
    <property type="molecule type" value="Genomic_DNA"/>
</dbReference>
<dbReference type="SMR" id="A4XYL9"/>
<dbReference type="STRING" id="399739.Pmen_3687"/>
<dbReference type="KEGG" id="pmy:Pmen_3687"/>
<dbReference type="PATRIC" id="fig|399739.8.peg.3739"/>
<dbReference type="eggNOG" id="COG0234">
    <property type="taxonomic scope" value="Bacteria"/>
</dbReference>
<dbReference type="HOGENOM" id="CLU_132825_2_0_6"/>
<dbReference type="OrthoDB" id="9806791at2"/>
<dbReference type="GO" id="GO:0005737">
    <property type="term" value="C:cytoplasm"/>
    <property type="evidence" value="ECO:0007669"/>
    <property type="project" value="UniProtKB-SubCell"/>
</dbReference>
<dbReference type="GO" id="GO:0005524">
    <property type="term" value="F:ATP binding"/>
    <property type="evidence" value="ECO:0007669"/>
    <property type="project" value="InterPro"/>
</dbReference>
<dbReference type="GO" id="GO:0046872">
    <property type="term" value="F:metal ion binding"/>
    <property type="evidence" value="ECO:0007669"/>
    <property type="project" value="TreeGrafter"/>
</dbReference>
<dbReference type="GO" id="GO:0044183">
    <property type="term" value="F:protein folding chaperone"/>
    <property type="evidence" value="ECO:0007669"/>
    <property type="project" value="InterPro"/>
</dbReference>
<dbReference type="GO" id="GO:0051087">
    <property type="term" value="F:protein-folding chaperone binding"/>
    <property type="evidence" value="ECO:0007669"/>
    <property type="project" value="TreeGrafter"/>
</dbReference>
<dbReference type="GO" id="GO:0051082">
    <property type="term" value="F:unfolded protein binding"/>
    <property type="evidence" value="ECO:0007669"/>
    <property type="project" value="TreeGrafter"/>
</dbReference>
<dbReference type="GO" id="GO:0051085">
    <property type="term" value="P:chaperone cofactor-dependent protein refolding"/>
    <property type="evidence" value="ECO:0007669"/>
    <property type="project" value="TreeGrafter"/>
</dbReference>
<dbReference type="CDD" id="cd00320">
    <property type="entry name" value="cpn10"/>
    <property type="match status" value="1"/>
</dbReference>
<dbReference type="FunFam" id="2.30.33.40:FF:000001">
    <property type="entry name" value="10 kDa chaperonin"/>
    <property type="match status" value="1"/>
</dbReference>
<dbReference type="Gene3D" id="2.30.33.40">
    <property type="entry name" value="GroES chaperonin"/>
    <property type="match status" value="1"/>
</dbReference>
<dbReference type="HAMAP" id="MF_00580">
    <property type="entry name" value="CH10"/>
    <property type="match status" value="1"/>
</dbReference>
<dbReference type="InterPro" id="IPR020818">
    <property type="entry name" value="Chaperonin_GroES"/>
</dbReference>
<dbReference type="InterPro" id="IPR037124">
    <property type="entry name" value="Chaperonin_GroES_sf"/>
</dbReference>
<dbReference type="InterPro" id="IPR018369">
    <property type="entry name" value="Chaprnonin_Cpn10_CS"/>
</dbReference>
<dbReference type="InterPro" id="IPR011032">
    <property type="entry name" value="GroES-like_sf"/>
</dbReference>
<dbReference type="NCBIfam" id="NF001527">
    <property type="entry name" value="PRK00364.1-2"/>
    <property type="match status" value="1"/>
</dbReference>
<dbReference type="NCBIfam" id="NF001531">
    <property type="entry name" value="PRK00364.2-2"/>
    <property type="match status" value="1"/>
</dbReference>
<dbReference type="NCBIfam" id="NF001533">
    <property type="entry name" value="PRK00364.2-4"/>
    <property type="match status" value="1"/>
</dbReference>
<dbReference type="PANTHER" id="PTHR10772">
    <property type="entry name" value="10 KDA HEAT SHOCK PROTEIN"/>
    <property type="match status" value="1"/>
</dbReference>
<dbReference type="PANTHER" id="PTHR10772:SF58">
    <property type="entry name" value="CO-CHAPERONIN GROES"/>
    <property type="match status" value="1"/>
</dbReference>
<dbReference type="Pfam" id="PF00166">
    <property type="entry name" value="Cpn10"/>
    <property type="match status" value="1"/>
</dbReference>
<dbReference type="PRINTS" id="PR00297">
    <property type="entry name" value="CHAPERONIN10"/>
</dbReference>
<dbReference type="SMART" id="SM00883">
    <property type="entry name" value="Cpn10"/>
    <property type="match status" value="1"/>
</dbReference>
<dbReference type="SUPFAM" id="SSF50129">
    <property type="entry name" value="GroES-like"/>
    <property type="match status" value="1"/>
</dbReference>
<dbReference type="PROSITE" id="PS00681">
    <property type="entry name" value="CHAPERONINS_CPN10"/>
    <property type="match status" value="1"/>
</dbReference>
<proteinExistence type="inferred from homology"/>
<name>CH10_ECTM1</name>